<keyword id="KW-0238">DNA-binding</keyword>
<keyword id="KW-0371">Homeobox</keyword>
<keyword id="KW-0440">LIM domain</keyword>
<keyword id="KW-0479">Metal-binding</keyword>
<keyword id="KW-0539">Nucleus</keyword>
<keyword id="KW-1267">Proteomics identification</keyword>
<keyword id="KW-1185">Reference proteome</keyword>
<keyword id="KW-0677">Repeat</keyword>
<keyword id="KW-0804">Transcription</keyword>
<keyword id="KW-0805">Transcription regulation</keyword>
<keyword id="KW-0862">Zinc</keyword>
<comment type="function">
    <text>Plays an essential role in the regulation of neuronal differentiation and migration during development of the central nervous system.</text>
</comment>
<comment type="interaction">
    <interactant intactId="EBI-25835523">
        <id>Q9H2C1</id>
    </interactant>
    <interactant intactId="EBI-718729">
        <id>P55212</id>
        <label>CASP6</label>
    </interactant>
    <organismsDiffer>false</organismsDiffer>
    <experiments>3</experiments>
</comment>
<comment type="interaction">
    <interactant intactId="EBI-25835523">
        <id>Q9H2C1</id>
    </interactant>
    <interactant intactId="EBI-6624398">
        <id>P06307</id>
        <label>CCK</label>
    </interactant>
    <organismsDiffer>false</organismsDiffer>
    <experiments>3</experiments>
</comment>
<comment type="interaction">
    <interactant intactId="EBI-25835523">
        <id>Q9H2C1</id>
    </interactant>
    <interactant intactId="EBI-745535">
        <id>Q8NI60</id>
        <label>COQ8A</label>
    </interactant>
    <organismsDiffer>false</organismsDiffer>
    <experiments>3</experiments>
</comment>
<comment type="interaction">
    <interactant intactId="EBI-25835523">
        <id>Q9H2C1</id>
    </interactant>
    <interactant intactId="EBI-10976677">
        <id>G5E9A7</id>
        <label>DMWD</label>
    </interactant>
    <organismsDiffer>false</organismsDiffer>
    <experiments>3</experiments>
</comment>
<comment type="interaction">
    <interactant intactId="EBI-25835523">
        <id>Q9H2C1</id>
    </interactant>
    <interactant intactId="EBI-348399">
        <id>P22607</id>
        <label>FGFR3</label>
    </interactant>
    <organismsDiffer>false</organismsDiffer>
    <experiments>3</experiments>
</comment>
<comment type="interaction">
    <interactant intactId="EBI-25835523">
        <id>Q9H2C1</id>
    </interactant>
    <interactant intactId="EBI-8285963">
        <id>Q14957</id>
        <label>GRIN2C</label>
    </interactant>
    <organismsDiffer>false</organismsDiffer>
    <experiments>3</experiments>
</comment>
<comment type="interaction">
    <interactant intactId="EBI-25835523">
        <id>Q9H2C1</id>
    </interactant>
    <interactant intactId="EBI-351506">
        <id>P06396</id>
        <label>GSN</label>
    </interactant>
    <organismsDiffer>false</organismsDiffer>
    <experiments>3</experiments>
</comment>
<comment type="interaction">
    <interactant intactId="EBI-25835523">
        <id>Q9H2C1</id>
    </interactant>
    <interactant intactId="EBI-473886">
        <id>O00291</id>
        <label>HIP1</label>
    </interactant>
    <organismsDiffer>false</organismsDiffer>
    <experiments>3</experiments>
</comment>
<comment type="interaction">
    <interactant intactId="EBI-25835523">
        <id>Q9H2C1</id>
    </interactant>
    <interactant intactId="EBI-8561769">
        <id>Q5SUL5</id>
        <label>HLA-A</label>
    </interactant>
    <organismsDiffer>false</organismsDiffer>
    <experiments>3</experiments>
</comment>
<comment type="interaction">
    <interactant intactId="EBI-25835523">
        <id>Q9H2C1</id>
    </interactant>
    <interactant intactId="EBI-466029">
        <id>P42858</id>
        <label>HTT</label>
    </interactant>
    <organismsDiffer>false</organismsDiffer>
    <experiments>15</experiments>
</comment>
<comment type="interaction">
    <interactant intactId="EBI-25835523">
        <id>Q9H2C1</id>
    </interactant>
    <interactant intactId="EBI-399080">
        <id>Q92993</id>
        <label>KAT5</label>
    </interactant>
    <organismsDiffer>false</organismsDiffer>
    <experiments>3</experiments>
</comment>
<comment type="interaction">
    <interactant intactId="EBI-25835523">
        <id>Q9H2C1</id>
    </interactant>
    <interactant intactId="EBI-21591415">
        <id>P13473-2</id>
        <label>LAMP2</label>
    </interactant>
    <organismsDiffer>false</organismsDiffer>
    <experiments>3</experiments>
</comment>
<comment type="interaction">
    <interactant intactId="EBI-25835523">
        <id>Q9H2C1</id>
    </interactant>
    <interactant intactId="EBI-11742507">
        <id>Q8TAP4-4</id>
        <label>LMO3</label>
    </interactant>
    <organismsDiffer>false</organismsDiffer>
    <experiments>3</experiments>
</comment>
<comment type="interaction">
    <interactant intactId="EBI-25835523">
        <id>Q9H2C1</id>
    </interactant>
    <interactant intactId="EBI-752057">
        <id>Q7Z412</id>
        <label>PEX26</label>
    </interactant>
    <organismsDiffer>false</organismsDiffer>
    <experiments>3</experiments>
</comment>
<comment type="interaction">
    <interactant intactId="EBI-25835523">
        <id>Q9H2C1</id>
    </interactant>
    <interactant intactId="EBI-50433196">
        <id>A0A6Q8PF08</id>
        <label>PMP22</label>
    </interactant>
    <organismsDiffer>false</organismsDiffer>
    <experiments>3</experiments>
</comment>
<comment type="interaction">
    <interactant intactId="EBI-25835523">
        <id>Q9H2C1</id>
    </interactant>
    <interactant intactId="EBI-359252">
        <id>P23284</id>
        <label>PPIB</label>
    </interactant>
    <organismsDiffer>false</organismsDiffer>
    <experiments>3</experiments>
</comment>
<comment type="interaction">
    <interactant intactId="EBI-25835523">
        <id>Q9H2C1</id>
    </interactant>
    <interactant intactId="EBI-5280197">
        <id>O75400-2</id>
        <label>PRPF40A</label>
    </interactant>
    <organismsDiffer>false</organismsDiffer>
    <experiments>3</experiments>
</comment>
<comment type="interaction">
    <interactant intactId="EBI-25835523">
        <id>Q9H2C1</id>
    </interactant>
    <interactant intactId="EBI-286642">
        <id>P62826</id>
        <label>RAN</label>
    </interactant>
    <organismsDiffer>false</organismsDiffer>
    <experiments>3</experiments>
</comment>
<comment type="interaction">
    <interactant intactId="EBI-25835523">
        <id>Q9H2C1</id>
    </interactant>
    <interactant intactId="EBI-9090795">
        <id>Q15047-2</id>
        <label>SETDB1</label>
    </interactant>
    <organismsDiffer>false</organismsDiffer>
    <experiments>3</experiments>
</comment>
<comment type="interaction">
    <interactant intactId="EBI-25835523">
        <id>Q9H2C1</id>
    </interactant>
    <interactant intactId="EBI-985879">
        <id>P37840</id>
        <label>SNCA</label>
    </interactant>
    <organismsDiffer>false</organismsDiffer>
    <experiments>3</experiments>
</comment>
<comment type="interaction">
    <interactant intactId="EBI-25835523">
        <id>Q9H2C1</id>
    </interactant>
    <interactant intactId="EBI-5235340">
        <id>Q7Z699</id>
        <label>SPRED1</label>
    </interactant>
    <organismsDiffer>false</organismsDiffer>
    <experiments>3</experiments>
</comment>
<comment type="interaction">
    <interactant intactId="EBI-25835523">
        <id>Q9H2C1</id>
    </interactant>
    <interactant intactId="EBI-12806590">
        <id>Q86WV8</id>
        <label>TSC1</label>
    </interactant>
    <organismsDiffer>false</organismsDiffer>
    <experiments>3</experiments>
</comment>
<comment type="interaction">
    <interactant intactId="EBI-25835523">
        <id>Q9H2C1</id>
    </interactant>
    <interactant intactId="EBI-741480">
        <id>Q9UMX0</id>
        <label>UBQLN1</label>
    </interactant>
    <organismsDiffer>false</organismsDiffer>
    <experiments>3</experiments>
</comment>
<comment type="interaction">
    <interactant intactId="EBI-25835523">
        <id>Q9H2C1</id>
    </interactant>
    <interactant intactId="EBI-1051424">
        <id>P22695</id>
        <label>UQCRC2</label>
    </interactant>
    <organismsDiffer>false</organismsDiffer>
    <experiments>3</experiments>
</comment>
<comment type="interaction">
    <interactant intactId="EBI-25835523">
        <id>Q9H2C1</id>
    </interactant>
    <interactant intactId="EBI-359832">
        <id>P61981</id>
        <label>YWHAG</label>
    </interactant>
    <organismsDiffer>false</organismsDiffer>
    <experiments>3</experiments>
</comment>
<comment type="subcellular location">
    <subcellularLocation>
        <location evidence="4">Nucleus</location>
    </subcellularLocation>
</comment>
<comment type="tissue specificity">
    <text>Expressed in fetal brain and in various regions of the adult central nervous system including the spinal cord, the thalamus, and the cerebellum.</text>
</comment>
<name>LHX5_HUMAN</name>
<evidence type="ECO:0000255" key="1">
    <source>
        <dbReference type="PROSITE-ProRule" id="PRU00108"/>
    </source>
</evidence>
<evidence type="ECO:0000255" key="2">
    <source>
        <dbReference type="PROSITE-ProRule" id="PRU00125"/>
    </source>
</evidence>
<evidence type="ECO:0000256" key="3">
    <source>
        <dbReference type="SAM" id="MobiDB-lite"/>
    </source>
</evidence>
<evidence type="ECO:0000305" key="4"/>
<sequence>MMVHCAGCERPILDRFLLNVLDRAWHIKCVQCCECKTNLSEKCFSREGKLYCKNDFFRRFGTKCAGCAQGISPSDLVRKARSKVFHLNCFTCMVCNKQLSTGEELYVIDENKFVCKDDYLSSSSLKEGSLNSVSSCTDRSLSPDLQDALQDDPKETDNSTSSDKETANNENEEQNSGTKRRGPRTTIKAKQLETLKAAFAATPKPTRHIREQLAQETGLNMRVIQVWFQNRRSKERRMKQLSALGARRHAFFRSPRRMRPLGGRLDESEMLGSTPYTYYGDYQGDYYAPGSNYDFFAHGPPSQAQSPADSSFLAASGPGSTPLGALEPPLAGPHAADNPRFTDMISHPDTPSPEPGLPGTLHPMPGEVFSGGPSPPFPMSGTSGYSGPLSHPNPELNEAAVW</sequence>
<dbReference type="EMBL" id="AF291181">
    <property type="protein sequence ID" value="AAG36963.1"/>
    <property type="molecule type" value="mRNA"/>
</dbReference>
<dbReference type="EMBL" id="BC109230">
    <property type="protein sequence ID" value="AAI09231.1"/>
    <property type="molecule type" value="mRNA"/>
</dbReference>
<dbReference type="CCDS" id="CCDS9171.1"/>
<dbReference type="RefSeq" id="NP_071758.1">
    <property type="nucleotide sequence ID" value="NM_022363.3"/>
</dbReference>
<dbReference type="SMR" id="Q9H2C1"/>
<dbReference type="FunCoup" id="Q9H2C1">
    <property type="interactions" value="472"/>
</dbReference>
<dbReference type="IntAct" id="Q9H2C1">
    <property type="interactions" value="25"/>
</dbReference>
<dbReference type="STRING" id="9606.ENSP00000261731"/>
<dbReference type="GlyGen" id="Q9H2C1">
    <property type="glycosylation" value="1 site, 1 N-linked glycan (1 site)"/>
</dbReference>
<dbReference type="iPTMnet" id="Q9H2C1"/>
<dbReference type="PhosphoSitePlus" id="Q9H2C1"/>
<dbReference type="BioMuta" id="LHX5"/>
<dbReference type="DMDM" id="18202938"/>
<dbReference type="MassIVE" id="Q9H2C1"/>
<dbReference type="PaxDb" id="9606-ENSP00000261731"/>
<dbReference type="PeptideAtlas" id="Q9H2C1"/>
<dbReference type="ProteomicsDB" id="80526"/>
<dbReference type="Antibodypedia" id="31279">
    <property type="antibodies" value="220 antibodies from 30 providers"/>
</dbReference>
<dbReference type="DNASU" id="64211"/>
<dbReference type="Ensembl" id="ENST00000261731.4">
    <property type="protein sequence ID" value="ENSP00000261731.2"/>
    <property type="gene ID" value="ENSG00000089116.4"/>
</dbReference>
<dbReference type="GeneID" id="64211"/>
<dbReference type="KEGG" id="hsa:64211"/>
<dbReference type="MANE-Select" id="ENST00000261731.4">
    <property type="protein sequence ID" value="ENSP00000261731.2"/>
    <property type="RefSeq nucleotide sequence ID" value="NM_022363.3"/>
    <property type="RefSeq protein sequence ID" value="NP_071758.1"/>
</dbReference>
<dbReference type="UCSC" id="uc001tvj.2">
    <property type="organism name" value="human"/>
</dbReference>
<dbReference type="AGR" id="HGNC:14216"/>
<dbReference type="CTD" id="64211"/>
<dbReference type="DisGeNET" id="64211"/>
<dbReference type="GeneCards" id="LHX5"/>
<dbReference type="HGNC" id="HGNC:14216">
    <property type="gene designation" value="LHX5"/>
</dbReference>
<dbReference type="HPA" id="ENSG00000089116">
    <property type="expression patterns" value="Group enriched (brain, stomach)"/>
</dbReference>
<dbReference type="MIM" id="605992">
    <property type="type" value="gene"/>
</dbReference>
<dbReference type="neXtProt" id="NX_Q9H2C1"/>
<dbReference type="OpenTargets" id="ENSG00000089116"/>
<dbReference type="PharmGKB" id="PA30367"/>
<dbReference type="VEuPathDB" id="HostDB:ENSG00000089116"/>
<dbReference type="eggNOG" id="KOG0490">
    <property type="taxonomic scope" value="Eukaryota"/>
</dbReference>
<dbReference type="GeneTree" id="ENSGT00940000161536"/>
<dbReference type="HOGENOM" id="CLU_027802_3_1_1"/>
<dbReference type="InParanoid" id="Q9H2C1"/>
<dbReference type="OMA" id="PSDDQRY"/>
<dbReference type="OrthoDB" id="10068367at2759"/>
<dbReference type="PAN-GO" id="Q9H2C1">
    <property type="GO annotations" value="5 GO annotations based on evolutionary models"/>
</dbReference>
<dbReference type="PhylomeDB" id="Q9H2C1"/>
<dbReference type="TreeFam" id="TF315442"/>
<dbReference type="PathwayCommons" id="Q9H2C1"/>
<dbReference type="SignaLink" id="Q9H2C1"/>
<dbReference type="BioGRID-ORCS" id="64211">
    <property type="hits" value="21 hits in 1169 CRISPR screens"/>
</dbReference>
<dbReference type="GenomeRNAi" id="64211"/>
<dbReference type="Pharos" id="Q9H2C1">
    <property type="development level" value="Tbio"/>
</dbReference>
<dbReference type="PRO" id="PR:Q9H2C1"/>
<dbReference type="Proteomes" id="UP000005640">
    <property type="component" value="Chromosome 12"/>
</dbReference>
<dbReference type="RNAct" id="Q9H2C1">
    <property type="molecule type" value="protein"/>
</dbReference>
<dbReference type="Bgee" id="ENSG00000089116">
    <property type="expression patterns" value="Expressed in hypothalamus and 18 other cell types or tissues"/>
</dbReference>
<dbReference type="GO" id="GO:0000785">
    <property type="term" value="C:chromatin"/>
    <property type="evidence" value="ECO:0000247"/>
    <property type="project" value="NTNU_SB"/>
</dbReference>
<dbReference type="GO" id="GO:0005634">
    <property type="term" value="C:nucleus"/>
    <property type="evidence" value="ECO:0000318"/>
    <property type="project" value="GO_Central"/>
</dbReference>
<dbReference type="GO" id="GO:0000981">
    <property type="term" value="F:DNA-binding transcription factor activity, RNA polymerase II-specific"/>
    <property type="evidence" value="ECO:0000247"/>
    <property type="project" value="NTNU_SB"/>
</dbReference>
<dbReference type="GO" id="GO:0000977">
    <property type="term" value="F:RNA polymerase II transcription regulatory region sequence-specific DNA binding"/>
    <property type="evidence" value="ECO:0000318"/>
    <property type="project" value="GO_Central"/>
</dbReference>
<dbReference type="GO" id="GO:1990837">
    <property type="term" value="F:sequence-specific double-stranded DNA binding"/>
    <property type="evidence" value="ECO:0000314"/>
    <property type="project" value="ARUK-UCL"/>
</dbReference>
<dbReference type="GO" id="GO:0008270">
    <property type="term" value="F:zinc ion binding"/>
    <property type="evidence" value="ECO:0007669"/>
    <property type="project" value="InterPro"/>
</dbReference>
<dbReference type="GO" id="GO:0021846">
    <property type="term" value="P:cell proliferation in forebrain"/>
    <property type="evidence" value="ECO:0007669"/>
    <property type="project" value="Ensembl"/>
</dbReference>
<dbReference type="GO" id="GO:0021702">
    <property type="term" value="P:cerebellar Purkinje cell differentiation"/>
    <property type="evidence" value="ECO:0007669"/>
    <property type="project" value="Ensembl"/>
</dbReference>
<dbReference type="GO" id="GO:0021937">
    <property type="term" value="P:cerebellar Purkinje cell-granule cell precursor cell signaling"/>
    <property type="evidence" value="ECO:0007669"/>
    <property type="project" value="Ensembl"/>
</dbReference>
<dbReference type="GO" id="GO:0021879">
    <property type="term" value="P:forebrain neuron differentiation"/>
    <property type="evidence" value="ECO:0007669"/>
    <property type="project" value="Ensembl"/>
</dbReference>
<dbReference type="GO" id="GO:0021766">
    <property type="term" value="P:hippocampus development"/>
    <property type="evidence" value="ECO:0007669"/>
    <property type="project" value="Ensembl"/>
</dbReference>
<dbReference type="GO" id="GO:0007405">
    <property type="term" value="P:neuroblast proliferation"/>
    <property type="evidence" value="ECO:0007669"/>
    <property type="project" value="Ensembl"/>
</dbReference>
<dbReference type="GO" id="GO:0030182">
    <property type="term" value="P:neuron differentiation"/>
    <property type="evidence" value="ECO:0000318"/>
    <property type="project" value="GO_Central"/>
</dbReference>
<dbReference type="GO" id="GO:0045893">
    <property type="term" value="P:positive regulation of DNA-templated transcription"/>
    <property type="evidence" value="ECO:0007669"/>
    <property type="project" value="Ensembl"/>
</dbReference>
<dbReference type="GO" id="GO:1902692">
    <property type="term" value="P:regulation of neuroblast proliferation"/>
    <property type="evidence" value="ECO:0007669"/>
    <property type="project" value="Ensembl"/>
</dbReference>
<dbReference type="GO" id="GO:0006357">
    <property type="term" value="P:regulation of transcription by RNA polymerase II"/>
    <property type="evidence" value="ECO:0000318"/>
    <property type="project" value="GO_Central"/>
</dbReference>
<dbReference type="GO" id="GO:0021527">
    <property type="term" value="P:spinal cord association neuron differentiation"/>
    <property type="evidence" value="ECO:0007669"/>
    <property type="project" value="Ensembl"/>
</dbReference>
<dbReference type="CDD" id="cd00086">
    <property type="entry name" value="homeodomain"/>
    <property type="match status" value="1"/>
</dbReference>
<dbReference type="CDD" id="cd09367">
    <property type="entry name" value="LIM1_Lhx1_Lhx5"/>
    <property type="match status" value="1"/>
</dbReference>
<dbReference type="CDD" id="cd09375">
    <property type="entry name" value="LIM2_Lhx1_Lhx5"/>
    <property type="match status" value="1"/>
</dbReference>
<dbReference type="FunFam" id="2.10.110.10:FF:000120">
    <property type="entry name" value="Insulin gene enhancer protein ISL-2"/>
    <property type="match status" value="1"/>
</dbReference>
<dbReference type="FunFam" id="1.10.10.60:FF:000075">
    <property type="entry name" value="LIM/homeobox protein Lhx1"/>
    <property type="match status" value="1"/>
</dbReference>
<dbReference type="FunFam" id="2.10.110.10:FF:000046">
    <property type="entry name" value="LIM/homeobox protein Lhx1"/>
    <property type="match status" value="1"/>
</dbReference>
<dbReference type="Gene3D" id="2.10.110.10">
    <property type="entry name" value="Cysteine Rich Protein"/>
    <property type="match status" value="2"/>
</dbReference>
<dbReference type="Gene3D" id="1.10.10.60">
    <property type="entry name" value="Homeodomain-like"/>
    <property type="match status" value="1"/>
</dbReference>
<dbReference type="InterPro" id="IPR001356">
    <property type="entry name" value="HD"/>
</dbReference>
<dbReference type="InterPro" id="IPR017970">
    <property type="entry name" value="Homeobox_CS"/>
</dbReference>
<dbReference type="InterPro" id="IPR009057">
    <property type="entry name" value="Homeodomain-like_sf"/>
</dbReference>
<dbReference type="InterPro" id="IPR049618">
    <property type="entry name" value="Lhx1/5_LIM1"/>
</dbReference>
<dbReference type="InterPro" id="IPR049619">
    <property type="entry name" value="Lhx1/5_LIM2"/>
</dbReference>
<dbReference type="InterPro" id="IPR050453">
    <property type="entry name" value="LIM_Homeobox_TF"/>
</dbReference>
<dbReference type="InterPro" id="IPR001781">
    <property type="entry name" value="Znf_LIM"/>
</dbReference>
<dbReference type="PANTHER" id="PTHR24208">
    <property type="entry name" value="LIM/HOMEOBOX PROTEIN LHX"/>
    <property type="match status" value="1"/>
</dbReference>
<dbReference type="PANTHER" id="PTHR24208:SF115">
    <property type="entry name" value="LIM_HOMEOBOX PROTEIN LHX5"/>
    <property type="match status" value="1"/>
</dbReference>
<dbReference type="Pfam" id="PF00046">
    <property type="entry name" value="Homeodomain"/>
    <property type="match status" value="1"/>
</dbReference>
<dbReference type="Pfam" id="PF00412">
    <property type="entry name" value="LIM"/>
    <property type="match status" value="2"/>
</dbReference>
<dbReference type="SMART" id="SM00389">
    <property type="entry name" value="HOX"/>
    <property type="match status" value="1"/>
</dbReference>
<dbReference type="SMART" id="SM00132">
    <property type="entry name" value="LIM"/>
    <property type="match status" value="2"/>
</dbReference>
<dbReference type="SUPFAM" id="SSF57716">
    <property type="entry name" value="Glucocorticoid receptor-like (DNA-binding domain)"/>
    <property type="match status" value="2"/>
</dbReference>
<dbReference type="SUPFAM" id="SSF46689">
    <property type="entry name" value="Homeodomain-like"/>
    <property type="match status" value="1"/>
</dbReference>
<dbReference type="PROSITE" id="PS00027">
    <property type="entry name" value="HOMEOBOX_1"/>
    <property type="match status" value="1"/>
</dbReference>
<dbReference type="PROSITE" id="PS50071">
    <property type="entry name" value="HOMEOBOX_2"/>
    <property type="match status" value="1"/>
</dbReference>
<dbReference type="PROSITE" id="PS00478">
    <property type="entry name" value="LIM_DOMAIN_1"/>
    <property type="match status" value="2"/>
</dbReference>
<dbReference type="PROSITE" id="PS50023">
    <property type="entry name" value="LIM_DOMAIN_2"/>
    <property type="match status" value="2"/>
</dbReference>
<proteinExistence type="evidence at protein level"/>
<reference key="1">
    <citation type="journal article" date="2000" name="Gene">
        <title>Genomic structure, chromosomal localization and expression of the human LIM-homeobox gene LHX5.</title>
        <authorList>
            <person name="Zhao Y."/>
            <person name="Hermesz E."/>
            <person name="Yarolin M.C."/>
            <person name="Westphal H."/>
        </authorList>
    </citation>
    <scope>NUCLEOTIDE SEQUENCE [MRNA]</scope>
</reference>
<reference key="2">
    <citation type="journal article" date="2004" name="Genome Res.">
        <title>The status, quality, and expansion of the NIH full-length cDNA project: the Mammalian Gene Collection (MGC).</title>
        <authorList>
            <consortium name="The MGC Project Team"/>
        </authorList>
    </citation>
    <scope>NUCLEOTIDE SEQUENCE [LARGE SCALE MRNA]</scope>
</reference>
<feature type="chain" id="PRO_0000075789" description="LIM/homeobox protein Lhx5">
    <location>
        <begin position="1"/>
        <end position="402"/>
    </location>
</feature>
<feature type="domain" description="LIM zinc-binding 1" evidence="2">
    <location>
        <begin position="3"/>
        <end position="61"/>
    </location>
</feature>
<feature type="domain" description="LIM zinc-binding 2" evidence="2">
    <location>
        <begin position="62"/>
        <end position="125"/>
    </location>
</feature>
<feature type="DNA-binding region" description="Homeobox" evidence="1">
    <location>
        <begin position="180"/>
        <end position="239"/>
    </location>
</feature>
<feature type="region of interest" description="Disordered" evidence="3">
    <location>
        <begin position="124"/>
        <end position="186"/>
    </location>
</feature>
<feature type="region of interest" description="Disordered" evidence="3">
    <location>
        <begin position="298"/>
        <end position="402"/>
    </location>
</feature>
<feature type="compositionally biased region" description="Low complexity" evidence="3">
    <location>
        <begin position="124"/>
        <end position="135"/>
    </location>
</feature>
<feature type="compositionally biased region" description="Basic and acidic residues" evidence="3">
    <location>
        <begin position="151"/>
        <end position="167"/>
    </location>
</feature>
<feature type="compositionally biased region" description="Low complexity" evidence="3">
    <location>
        <begin position="300"/>
        <end position="311"/>
    </location>
</feature>
<feature type="compositionally biased region" description="Low complexity" evidence="3">
    <location>
        <begin position="322"/>
        <end position="336"/>
    </location>
</feature>
<protein>
    <recommendedName>
        <fullName>LIM/homeobox protein Lhx5</fullName>
        <shortName>LIM homeobox protein 5</shortName>
    </recommendedName>
</protein>
<gene>
    <name type="primary">LHX5</name>
</gene>
<organism>
    <name type="scientific">Homo sapiens</name>
    <name type="common">Human</name>
    <dbReference type="NCBI Taxonomy" id="9606"/>
    <lineage>
        <taxon>Eukaryota</taxon>
        <taxon>Metazoa</taxon>
        <taxon>Chordata</taxon>
        <taxon>Craniata</taxon>
        <taxon>Vertebrata</taxon>
        <taxon>Euteleostomi</taxon>
        <taxon>Mammalia</taxon>
        <taxon>Eutheria</taxon>
        <taxon>Euarchontoglires</taxon>
        <taxon>Primates</taxon>
        <taxon>Haplorrhini</taxon>
        <taxon>Catarrhini</taxon>
        <taxon>Hominidae</taxon>
        <taxon>Homo</taxon>
    </lineage>
</organism>
<accession>Q9H2C1</accession>
<accession>Q32MA4</accession>